<feature type="chain" id="PRO_0000357221" description="Methylthioribose-1-phosphate isomerase">
    <location>
        <begin position="1"/>
        <end position="358"/>
    </location>
</feature>
<feature type="active site" description="Proton donor" evidence="1">
    <location>
        <position position="246"/>
    </location>
</feature>
<feature type="binding site" evidence="1">
    <location>
        <begin position="54"/>
        <end position="56"/>
    </location>
    <ligand>
        <name>substrate</name>
    </ligand>
</feature>
<feature type="binding site" evidence="1">
    <location>
        <position position="96"/>
    </location>
    <ligand>
        <name>substrate</name>
    </ligand>
</feature>
<feature type="binding site" evidence="1">
    <location>
        <position position="205"/>
    </location>
    <ligand>
        <name>substrate</name>
    </ligand>
</feature>
<feature type="binding site" evidence="1">
    <location>
        <begin position="256"/>
        <end position="257"/>
    </location>
    <ligand>
        <name>substrate</name>
    </ligand>
</feature>
<feature type="site" description="Transition state stabilizer" evidence="1">
    <location>
        <position position="166"/>
    </location>
</feature>
<keyword id="KW-0028">Amino-acid biosynthesis</keyword>
<keyword id="KW-0413">Isomerase</keyword>
<keyword id="KW-0486">Methionine biosynthesis</keyword>
<dbReference type="EC" id="5.3.1.23" evidence="1"/>
<dbReference type="EMBL" id="CP000438">
    <property type="protein sequence ID" value="ABJ12394.1"/>
    <property type="molecule type" value="Genomic_DNA"/>
</dbReference>
<dbReference type="RefSeq" id="WP_003091449.1">
    <property type="nucleotide sequence ID" value="NZ_CP034244.1"/>
</dbReference>
<dbReference type="SMR" id="Q02PX5"/>
<dbReference type="KEGG" id="pau:PA14_23250"/>
<dbReference type="PseudoCAP" id="PA14_23250"/>
<dbReference type="HOGENOM" id="CLU_016218_1_2_6"/>
<dbReference type="BioCyc" id="PAER208963:G1G74-1935-MONOMER"/>
<dbReference type="UniPathway" id="UPA00904">
    <property type="reaction ID" value="UER00874"/>
</dbReference>
<dbReference type="Proteomes" id="UP000000653">
    <property type="component" value="Chromosome"/>
</dbReference>
<dbReference type="GO" id="GO:0046523">
    <property type="term" value="F:S-methyl-5-thioribose-1-phosphate isomerase activity"/>
    <property type="evidence" value="ECO:0007669"/>
    <property type="project" value="UniProtKB-UniRule"/>
</dbReference>
<dbReference type="GO" id="GO:0019509">
    <property type="term" value="P:L-methionine salvage from methylthioadenosine"/>
    <property type="evidence" value="ECO:0007669"/>
    <property type="project" value="UniProtKB-UniRule"/>
</dbReference>
<dbReference type="FunFam" id="1.20.120.420:FF:000008">
    <property type="entry name" value="Methylthioribose-1-phosphate isomerase"/>
    <property type="match status" value="1"/>
</dbReference>
<dbReference type="FunFam" id="3.40.50.10470:FF:000006">
    <property type="entry name" value="Methylthioribose-1-phosphate isomerase"/>
    <property type="match status" value="1"/>
</dbReference>
<dbReference type="Gene3D" id="1.20.120.420">
    <property type="entry name" value="translation initiation factor eif-2b, domain 1"/>
    <property type="match status" value="1"/>
</dbReference>
<dbReference type="Gene3D" id="3.40.50.10470">
    <property type="entry name" value="Translation initiation factor eif-2b, domain 2"/>
    <property type="match status" value="1"/>
</dbReference>
<dbReference type="HAMAP" id="MF_01678">
    <property type="entry name" value="Salvage_MtnA"/>
    <property type="match status" value="1"/>
</dbReference>
<dbReference type="InterPro" id="IPR000649">
    <property type="entry name" value="IF-2B-related"/>
</dbReference>
<dbReference type="InterPro" id="IPR005251">
    <property type="entry name" value="IF-M1Pi"/>
</dbReference>
<dbReference type="InterPro" id="IPR042529">
    <property type="entry name" value="IF_2B-like_C"/>
</dbReference>
<dbReference type="InterPro" id="IPR011559">
    <property type="entry name" value="Initiation_fac_2B_a/b/d"/>
</dbReference>
<dbReference type="InterPro" id="IPR027363">
    <property type="entry name" value="M1Pi_N"/>
</dbReference>
<dbReference type="InterPro" id="IPR037171">
    <property type="entry name" value="NagB/RpiA_transferase-like"/>
</dbReference>
<dbReference type="NCBIfam" id="TIGR00524">
    <property type="entry name" value="eIF-2B_rel"/>
    <property type="match status" value="1"/>
</dbReference>
<dbReference type="NCBIfam" id="NF004326">
    <property type="entry name" value="PRK05720.1"/>
    <property type="match status" value="1"/>
</dbReference>
<dbReference type="NCBIfam" id="TIGR00512">
    <property type="entry name" value="salvage_mtnA"/>
    <property type="match status" value="1"/>
</dbReference>
<dbReference type="PANTHER" id="PTHR43475">
    <property type="entry name" value="METHYLTHIORIBOSE-1-PHOSPHATE ISOMERASE"/>
    <property type="match status" value="1"/>
</dbReference>
<dbReference type="PANTHER" id="PTHR43475:SF1">
    <property type="entry name" value="METHYLTHIORIBOSE-1-PHOSPHATE ISOMERASE"/>
    <property type="match status" value="1"/>
</dbReference>
<dbReference type="Pfam" id="PF01008">
    <property type="entry name" value="IF-2B"/>
    <property type="match status" value="1"/>
</dbReference>
<dbReference type="SUPFAM" id="SSF100950">
    <property type="entry name" value="NagB/RpiA/CoA transferase-like"/>
    <property type="match status" value="1"/>
</dbReference>
<organism>
    <name type="scientific">Pseudomonas aeruginosa (strain UCBPP-PA14)</name>
    <dbReference type="NCBI Taxonomy" id="208963"/>
    <lineage>
        <taxon>Bacteria</taxon>
        <taxon>Pseudomonadati</taxon>
        <taxon>Pseudomonadota</taxon>
        <taxon>Gammaproteobacteria</taxon>
        <taxon>Pseudomonadales</taxon>
        <taxon>Pseudomonadaceae</taxon>
        <taxon>Pseudomonas</taxon>
    </lineage>
</organism>
<protein>
    <recommendedName>
        <fullName evidence="1">Methylthioribose-1-phosphate isomerase</fullName>
        <shortName evidence="1">M1Pi</shortName>
        <shortName evidence="1">MTR-1-P isomerase</shortName>
        <ecNumber evidence="1">5.3.1.23</ecNumber>
    </recommendedName>
    <alternativeName>
        <fullName evidence="1">S-methyl-5-thioribose-1-phosphate isomerase</fullName>
    </alternativeName>
</protein>
<gene>
    <name evidence="1" type="primary">mtnA</name>
    <name type="ordered locus">PA14_23250</name>
</gene>
<reference key="1">
    <citation type="journal article" date="2006" name="Genome Biol.">
        <title>Genomic analysis reveals that Pseudomonas aeruginosa virulence is combinatorial.</title>
        <authorList>
            <person name="Lee D.G."/>
            <person name="Urbach J.M."/>
            <person name="Wu G."/>
            <person name="Liberati N.T."/>
            <person name="Feinbaum R.L."/>
            <person name="Miyata S."/>
            <person name="Diggins L.T."/>
            <person name="He J."/>
            <person name="Saucier M."/>
            <person name="Deziel E."/>
            <person name="Friedman L."/>
            <person name="Li L."/>
            <person name="Grills G."/>
            <person name="Montgomery K."/>
            <person name="Kucherlapati R."/>
            <person name="Rahme L.G."/>
            <person name="Ausubel F.M."/>
        </authorList>
    </citation>
    <scope>NUCLEOTIDE SEQUENCE [LARGE SCALE GENOMIC DNA]</scope>
    <source>
        <strain>UCBPP-PA14</strain>
    </source>
</reference>
<proteinExistence type="inferred from homology"/>
<comment type="function">
    <text evidence="1">Catalyzes the interconversion of methylthioribose-1-phosphate (MTR-1-P) into methylthioribulose-1-phosphate (MTRu-1-P).</text>
</comment>
<comment type="catalytic activity">
    <reaction evidence="1">
        <text>5-(methylsulfanyl)-alpha-D-ribose 1-phosphate = 5-(methylsulfanyl)-D-ribulose 1-phosphate</text>
        <dbReference type="Rhea" id="RHEA:19989"/>
        <dbReference type="ChEBI" id="CHEBI:58533"/>
        <dbReference type="ChEBI" id="CHEBI:58548"/>
        <dbReference type="EC" id="5.3.1.23"/>
    </reaction>
</comment>
<comment type="pathway">
    <text evidence="1">Amino-acid biosynthesis; L-methionine biosynthesis via salvage pathway; L-methionine from S-methyl-5-thio-alpha-D-ribose 1-phosphate: step 1/6.</text>
</comment>
<comment type="similarity">
    <text evidence="2">Belongs to the eIF-2B alpha/beta/delta subunits family. MtnA subfamily.</text>
</comment>
<evidence type="ECO:0000255" key="1">
    <source>
        <dbReference type="HAMAP-Rule" id="MF_01678"/>
    </source>
</evidence>
<evidence type="ECO:0000305" key="2"/>
<name>MTNA_PSEAB</name>
<sequence length="358" mass="39425">MRERLLAAERVKAIEWRDGTLRLLDQRLLPQEEVWLEHESAAEVAKAIRDMVVRGAPAIGISAAYGIVLGARARLAQGGDWRAALEEDFRLLADSRPTAVNLFWALNRMRDRLERMKEGDQPLAVLEAEAISIHESDREANLTMAQLGMELIRKQQGSPQNILTHCNTGALATGGFGTALGVIRAAHLEGLVNRIYADETRPWLQGSRLTAWELANEGIPVSLNVDSAAAHLMKTENITWVIVGADRITANGDVANKIGTYQLAVNAMHHGVRFMVVAPSSTIDMNLESGEDIPIEERDGRELLEIGGRRVAAEVDAYNPVFDVTPADLIDAIVTERGVVERPDAERMAALMSRKRLH</sequence>
<accession>Q02PX5</accession>